<name>TVA24_HUMAN</name>
<gene>
    <name evidence="8" type="primary">TRAV24</name>
</gene>
<protein>
    <recommendedName>
        <fullName evidence="8">T cell receptor alpha variable 24</fullName>
    </recommendedName>
</protein>
<accession>A0A0B4J272</accession>
<evidence type="ECO:0000255" key="1"/>
<evidence type="ECO:0000255" key="2">
    <source>
        <dbReference type="PROSITE-ProRule" id="PRU00114"/>
    </source>
</evidence>
<evidence type="ECO:0000303" key="3">
    <source>
    </source>
</evidence>
<evidence type="ECO:0000303" key="4">
    <source>
    </source>
</evidence>
<evidence type="ECO:0000303" key="5">
    <source>
    </source>
</evidence>
<evidence type="ECO:0000303" key="6">
    <source>
    </source>
</evidence>
<evidence type="ECO:0000303" key="7">
    <source>
    </source>
</evidence>
<evidence type="ECO:0000303" key="8">
    <source ref="2"/>
</evidence>
<evidence type="ECO:0000305" key="9"/>
<evidence type="ECO:0007829" key="10">
    <source>
        <dbReference type="PDB" id="6CPH"/>
    </source>
</evidence>
<evidence type="ECO:0007829" key="11">
    <source>
        <dbReference type="PDB" id="6CQL"/>
    </source>
</evidence>
<evidence type="ECO:0007829" key="12">
    <source>
        <dbReference type="PDB" id="6CQN"/>
    </source>
</evidence>
<feature type="signal peptide" evidence="1">
    <location>
        <begin position="1"/>
        <end position="22"/>
    </location>
</feature>
<feature type="chain" id="PRO_5002092613" description="T cell receptor alpha variable 24" evidence="1">
    <location>
        <begin position="23"/>
        <end position="114"/>
    </location>
</feature>
<feature type="domain" description="Ig-like" evidence="2">
    <location>
        <begin position="23"/>
        <end position="114" status="greater than"/>
    </location>
</feature>
<feature type="glycosylation site" description="N-linked (GlcNAc...) asparagine" evidence="1">
    <location>
        <position position="42"/>
    </location>
</feature>
<feature type="disulfide bond" evidence="2">
    <location>
        <begin position="45"/>
        <end position="112"/>
    </location>
</feature>
<feature type="non-terminal residue">
    <location>
        <position position="114"/>
    </location>
</feature>
<feature type="strand" evidence="10">
    <location>
        <begin position="27"/>
        <end position="36"/>
    </location>
</feature>
<feature type="strand" evidence="10">
    <location>
        <begin position="41"/>
        <end position="46"/>
    </location>
</feature>
<feature type="strand" evidence="11">
    <location>
        <begin position="49"/>
        <end position="51"/>
    </location>
</feature>
<feature type="strand" evidence="10">
    <location>
        <begin position="54"/>
        <end position="60"/>
    </location>
</feature>
<feature type="strand" evidence="12">
    <location>
        <begin position="62"/>
        <end position="64"/>
    </location>
</feature>
<feature type="strand" evidence="10">
    <location>
        <begin position="67"/>
        <end position="72"/>
    </location>
</feature>
<feature type="strand" evidence="10">
    <location>
        <begin position="78"/>
        <end position="81"/>
    </location>
</feature>
<feature type="strand" evidence="10">
    <location>
        <begin position="84"/>
        <end position="87"/>
    </location>
</feature>
<feature type="turn" evidence="10">
    <location>
        <begin position="90"/>
        <end position="93"/>
    </location>
</feature>
<feature type="strand" evidence="10">
    <location>
        <begin position="94"/>
        <end position="101"/>
    </location>
</feature>
<feature type="helix" evidence="10">
    <location>
        <begin position="104"/>
        <end position="106"/>
    </location>
</feature>
<feature type="strand" evidence="10">
    <location>
        <begin position="108"/>
        <end position="114"/>
    </location>
</feature>
<sequence length="114" mass="12919">MEKNPLAAPLLILWFHLDCVSSILNVEQSPQSLHVQEGDSTNFTCSFPSSNFYALHWYRWETAKSPEALFVMTLNGDEKKKGRISATLNTKEGYSYLYIKGSQPEDSATYLCAF</sequence>
<dbReference type="EMBL" id="AC245505">
    <property type="status" value="NOT_ANNOTATED_CDS"/>
    <property type="molecule type" value="Genomic_DNA"/>
</dbReference>
<dbReference type="PDB" id="6CPH">
    <property type="method" value="X-ray"/>
    <property type="resolution" value="1.70 A"/>
    <property type="chains" value="D=23-114"/>
</dbReference>
<dbReference type="PDB" id="6CQL">
    <property type="method" value="X-ray"/>
    <property type="resolution" value="2.40 A"/>
    <property type="chains" value="D=23-114"/>
</dbReference>
<dbReference type="PDB" id="6CQN">
    <property type="method" value="X-ray"/>
    <property type="resolution" value="2.50 A"/>
    <property type="chains" value="D=23-114"/>
</dbReference>
<dbReference type="PDB" id="6CQQ">
    <property type="method" value="X-ray"/>
    <property type="resolution" value="2.80 A"/>
    <property type="chains" value="D/I=23-114"/>
</dbReference>
<dbReference type="PDB" id="6CQR">
    <property type="method" value="X-ray"/>
    <property type="resolution" value="3.04 A"/>
    <property type="chains" value="D/I=23-114"/>
</dbReference>
<dbReference type="PDBsum" id="6CPH"/>
<dbReference type="PDBsum" id="6CQL"/>
<dbReference type="PDBsum" id="6CQN"/>
<dbReference type="PDBsum" id="6CQQ"/>
<dbReference type="PDBsum" id="6CQR"/>
<dbReference type="SMR" id="A0A0B4J272"/>
<dbReference type="FunCoup" id="A0A0B4J272">
    <property type="interactions" value="336"/>
</dbReference>
<dbReference type="IMGT_GENE-DB" id="TRAV24"/>
<dbReference type="GlyCosmos" id="A0A0B4J272">
    <property type="glycosylation" value="1 site, No reported glycans"/>
</dbReference>
<dbReference type="GlyGen" id="A0A0B4J272">
    <property type="glycosylation" value="1 site"/>
</dbReference>
<dbReference type="BioMuta" id="TRAV24"/>
<dbReference type="Ensembl" id="ENST00000390453.1">
    <property type="protein sequence ID" value="ENSP00000451837.1"/>
    <property type="gene ID" value="ENSG00000211805.1"/>
</dbReference>
<dbReference type="AGR" id="HGNC:12121"/>
<dbReference type="GeneCards" id="TRAV24"/>
<dbReference type="HGNC" id="HGNC:12121">
    <property type="gene designation" value="TRAV24"/>
</dbReference>
<dbReference type="HPA" id="ENSG00000211805">
    <property type="expression patterns" value="Tissue enriched (lymphoid)"/>
</dbReference>
<dbReference type="neXtProt" id="NX_A0A0B4J272"/>
<dbReference type="OpenTargets" id="ENSG00000211805"/>
<dbReference type="VEuPathDB" id="HostDB:ENSG00000211805"/>
<dbReference type="GeneTree" id="ENSGT00940000163717"/>
<dbReference type="HOGENOM" id="CLU_077975_8_3_1"/>
<dbReference type="InParanoid" id="A0A0B4J272"/>
<dbReference type="OMA" id="YLCAITQ"/>
<dbReference type="OrthoDB" id="8865476at2759"/>
<dbReference type="PAN-GO" id="A0A0B4J272">
    <property type="GO annotations" value="1 GO annotation based on evolutionary models"/>
</dbReference>
<dbReference type="PhylomeDB" id="A0A0B4J272"/>
<dbReference type="ChiTaRS" id="TRAV24">
    <property type="organism name" value="human"/>
</dbReference>
<dbReference type="Pharos" id="A0A0B4J272">
    <property type="development level" value="Tdark"/>
</dbReference>
<dbReference type="PRO" id="PR:A0A0B4J272"/>
<dbReference type="Proteomes" id="UP000005640">
    <property type="component" value="Chromosome 14"/>
</dbReference>
<dbReference type="RNAct" id="A0A0B4J272">
    <property type="molecule type" value="protein"/>
</dbReference>
<dbReference type="Bgee" id="ENSG00000211805">
    <property type="expression patterns" value="Expressed in granulocyte and 87 other cell types or tissues"/>
</dbReference>
<dbReference type="GO" id="GO:0042101">
    <property type="term" value="C:T cell receptor complex"/>
    <property type="evidence" value="ECO:0007669"/>
    <property type="project" value="UniProtKB-KW"/>
</dbReference>
<dbReference type="GO" id="GO:0002250">
    <property type="term" value="P:adaptive immune response"/>
    <property type="evidence" value="ECO:0007669"/>
    <property type="project" value="UniProtKB-KW"/>
</dbReference>
<dbReference type="GO" id="GO:0009617">
    <property type="term" value="P:response to bacterium"/>
    <property type="evidence" value="ECO:0000318"/>
    <property type="project" value="GO_Central"/>
</dbReference>
<dbReference type="CDD" id="cd04983">
    <property type="entry name" value="IgV_TCR_alpha"/>
    <property type="match status" value="1"/>
</dbReference>
<dbReference type="Gene3D" id="2.60.40.10">
    <property type="entry name" value="Immunoglobulins"/>
    <property type="match status" value="1"/>
</dbReference>
<dbReference type="InterPro" id="IPR007110">
    <property type="entry name" value="Ig-like_dom"/>
</dbReference>
<dbReference type="InterPro" id="IPR036179">
    <property type="entry name" value="Ig-like_dom_sf"/>
</dbReference>
<dbReference type="InterPro" id="IPR013783">
    <property type="entry name" value="Ig-like_fold"/>
</dbReference>
<dbReference type="InterPro" id="IPR013106">
    <property type="entry name" value="Ig_V-set"/>
</dbReference>
<dbReference type="InterPro" id="IPR051006">
    <property type="entry name" value="TCR_variable_domain"/>
</dbReference>
<dbReference type="PANTHER" id="PTHR19343:SF17">
    <property type="entry name" value="IG-LIKE DOMAIN-CONTAINING PROTEIN"/>
    <property type="match status" value="1"/>
</dbReference>
<dbReference type="PANTHER" id="PTHR19343">
    <property type="entry name" value="T CELL RECEPTOR ALPHA VARIABLE 1-2"/>
    <property type="match status" value="1"/>
</dbReference>
<dbReference type="Pfam" id="PF07686">
    <property type="entry name" value="V-set"/>
    <property type="match status" value="1"/>
</dbReference>
<dbReference type="SMART" id="SM00406">
    <property type="entry name" value="IGv"/>
    <property type="match status" value="1"/>
</dbReference>
<dbReference type="SUPFAM" id="SSF48726">
    <property type="entry name" value="Immunoglobulin"/>
    <property type="match status" value="1"/>
</dbReference>
<dbReference type="PROSITE" id="PS50835">
    <property type="entry name" value="IG_LIKE"/>
    <property type="match status" value="1"/>
</dbReference>
<proteinExistence type="evidence at protein level"/>
<reference key="1">
    <citation type="journal article" date="2003" name="Nature">
        <title>The DNA sequence and analysis of human chromosome 14.</title>
        <authorList>
            <person name="Heilig R."/>
            <person name="Eckenberg R."/>
            <person name="Petit J.-L."/>
            <person name="Fonknechten N."/>
            <person name="Da Silva C."/>
            <person name="Cattolico L."/>
            <person name="Levy M."/>
            <person name="Barbe V."/>
            <person name="De Berardinis V."/>
            <person name="Ureta-Vidal A."/>
            <person name="Pelletier E."/>
            <person name="Vico V."/>
            <person name="Anthouard V."/>
            <person name="Rowen L."/>
            <person name="Madan A."/>
            <person name="Qin S."/>
            <person name="Sun H."/>
            <person name="Du H."/>
            <person name="Pepin K."/>
            <person name="Artiguenave F."/>
            <person name="Robert C."/>
            <person name="Cruaud C."/>
            <person name="Bruels T."/>
            <person name="Jaillon O."/>
            <person name="Friedlander L."/>
            <person name="Samson G."/>
            <person name="Brottier P."/>
            <person name="Cure S."/>
            <person name="Segurens B."/>
            <person name="Aniere F."/>
            <person name="Samain S."/>
            <person name="Crespeau H."/>
            <person name="Abbasi N."/>
            <person name="Aiach N."/>
            <person name="Boscus D."/>
            <person name="Dickhoff R."/>
            <person name="Dors M."/>
            <person name="Dubois I."/>
            <person name="Friedman C."/>
            <person name="Gouyvenoux M."/>
            <person name="James R."/>
            <person name="Madan A."/>
            <person name="Mairey-Estrada B."/>
            <person name="Mangenot S."/>
            <person name="Martins N."/>
            <person name="Menard M."/>
            <person name="Oztas S."/>
            <person name="Ratcliffe A."/>
            <person name="Shaffer T."/>
            <person name="Trask B."/>
            <person name="Vacherie B."/>
            <person name="Bellemere C."/>
            <person name="Belser C."/>
            <person name="Besnard-Gonnet M."/>
            <person name="Bartol-Mavel D."/>
            <person name="Boutard M."/>
            <person name="Briez-Silla S."/>
            <person name="Combette S."/>
            <person name="Dufosse-Laurent V."/>
            <person name="Ferron C."/>
            <person name="Lechaplais C."/>
            <person name="Louesse C."/>
            <person name="Muselet D."/>
            <person name="Magdelenat G."/>
            <person name="Pateau E."/>
            <person name="Petit E."/>
            <person name="Sirvain-Trukniewicz P."/>
            <person name="Trybou A."/>
            <person name="Vega-Czarny N."/>
            <person name="Bataille E."/>
            <person name="Bluet E."/>
            <person name="Bordelais I."/>
            <person name="Dubois M."/>
            <person name="Dumont C."/>
            <person name="Guerin T."/>
            <person name="Haffray S."/>
            <person name="Hammadi R."/>
            <person name="Muanga J."/>
            <person name="Pellouin V."/>
            <person name="Robert D."/>
            <person name="Wunderle E."/>
            <person name="Gauguet G."/>
            <person name="Roy A."/>
            <person name="Sainte-Marthe L."/>
            <person name="Verdier J."/>
            <person name="Verdier-Discala C."/>
            <person name="Hillier L.W."/>
            <person name="Fulton L."/>
            <person name="McPherson J."/>
            <person name="Matsuda F."/>
            <person name="Wilson R."/>
            <person name="Scarpelli C."/>
            <person name="Gyapay G."/>
            <person name="Wincker P."/>
            <person name="Saurin W."/>
            <person name="Quetier F."/>
            <person name="Waterston R."/>
            <person name="Hood L."/>
            <person name="Weissenbach J."/>
        </authorList>
    </citation>
    <scope>NUCLEOTIDE SEQUENCE [LARGE SCALE GENOMIC DNA] (IMGT ALLELE TRAV24*01)</scope>
</reference>
<reference key="2">
    <citation type="book" date="2001" name="The T Cell Receptor FactsBook.">
        <title>The T Cell Receptor FactsBook.</title>
        <editorList>
            <person name="Lefranc M.P."/>
            <person name="Lefranc G."/>
        </editorList>
        <authorList>
            <person name="Lefranc M.P."/>
            <person name="Lefranc G."/>
        </authorList>
    </citation>
    <scope>NOMENCLATURE</scope>
</reference>
<reference key="3">
    <citation type="journal article" date="2004" name="Nat. Rev. Immunol.">
        <title>The many important facets of T-cell repertoire diversity.</title>
        <authorList>
            <person name="Nikolich-Zugich J."/>
            <person name="Slifka M.K."/>
            <person name="Messaoudi I."/>
        </authorList>
    </citation>
    <scope>REVIEW ON T CELL REPERTOIRE DIVERSITY</scope>
</reference>
<reference key="4">
    <citation type="journal article" date="2010" name="Cold Spring Harb. Perspect. Biol.">
        <title>Structural biology of the T-cell receptor: insights into receptor assembly, ligand recognition, and initiation of signaling.</title>
        <authorList>
            <person name="Wucherpfennig K.W."/>
            <person name="Gagnon E."/>
            <person name="Call M.J."/>
            <person name="Huseby E.S."/>
            <person name="Call M.E."/>
        </authorList>
    </citation>
    <scope>REVIEW ON T CELL RECEPTOR-CD3 COMPLEX ASSEMBLY</scope>
    <scope>SUBCELLULAR LOCATION</scope>
</reference>
<reference key="5">
    <citation type="journal article" date="2013" name="Nat. Rev. Immunol.">
        <title>T cell receptor signalling networks: branched, diversified and bounded.</title>
        <authorList>
            <person name="Brownlie R.J."/>
            <person name="Zamoyska R."/>
        </authorList>
    </citation>
    <scope>REVIEW ON T CELL RECEPTOR SIGNALING</scope>
</reference>
<reference key="6">
    <citation type="journal article" date="2014" name="Front. Immunol.">
        <title>Immunoglobulin and T Cell Receptor Genes: IMGT((R)) and the Birth and Rise of Immunoinformatics.</title>
        <authorList>
            <person name="Lefranc M.P."/>
        </authorList>
    </citation>
    <scope>NOMENCLATURE</scope>
</reference>
<reference key="7">
    <citation type="journal article" date="2015" name="Annu. Rev. Immunol.">
        <title>T cell antigen receptor recognition of antigen-presenting molecules.</title>
        <authorList>
            <person name="Rossjohn J."/>
            <person name="Gras S."/>
            <person name="Miles J.J."/>
            <person name="Turner S.J."/>
            <person name="Godfrey D.I."/>
            <person name="McCluskey J."/>
        </authorList>
    </citation>
    <scope>REVIEW ON FUNCTION</scope>
</reference>
<organism>
    <name type="scientific">Homo sapiens</name>
    <name type="common">Human</name>
    <dbReference type="NCBI Taxonomy" id="9606"/>
    <lineage>
        <taxon>Eukaryota</taxon>
        <taxon>Metazoa</taxon>
        <taxon>Chordata</taxon>
        <taxon>Craniata</taxon>
        <taxon>Vertebrata</taxon>
        <taxon>Euteleostomi</taxon>
        <taxon>Mammalia</taxon>
        <taxon>Eutheria</taxon>
        <taxon>Euarchontoglires</taxon>
        <taxon>Primates</taxon>
        <taxon>Haplorrhini</taxon>
        <taxon>Catarrhini</taxon>
        <taxon>Hominidae</taxon>
        <taxon>Homo</taxon>
    </lineage>
</organism>
<comment type="function">
    <text evidence="3 5 6 7">V region of the variable domain of T cell receptor (TR) alpha chain that participates in the antigen recognition (PubMed:24600447). Alpha-beta T cell receptors are antigen specific receptors which are essential to the immune response and are present on the cell surface of T lymphocytes. Recognize peptide-major histocompatibility (MH) (pMH) complexes that are displayed by antigen presenting cells (APC), a prerequisite for efficient T cell adaptive immunity against pathogens (PubMed:25493333). Binding of alpha-beta TR to pMH complex initiates TR-CD3 clustering on the cell surface and intracellular activation of LCK that phosphorylates the ITAM motifs of CD3G, CD3D, CD3E and CD247 enabling the recruitment of ZAP70. In turn ZAP70 phosphorylates LAT, which recruits numerous signaling molecules to form the LAT signalosome. The LAT signalosome propagates signal branching to three major signaling pathways, the calcium, the mitogen-activated protein kinase (MAPK) kinase and the nuclear factor NF-kappa-B (NF-kB) pathways, leading to the mobilization of transcription factors that are critical for gene expression and essential for T cell growth and differentiation (PubMed:23524462). The T cell repertoire is generated in the thymus, by V-(D)-J rearrangement. This repertoire is then shaped by intrathymic selection events to generate a peripheral T cell pool of self-MH restricted, non-autoaggressive T cells. Post-thymic interaction of alpha-beta TR with the pMH complexes shapes TR structural and functional avidity (PubMed:15040585).</text>
</comment>
<comment type="subunit">
    <text evidence="4">Alpha-beta TR is a heterodimer composed of an alpha and beta chain; disulfide-linked. The alpha-beta TR is associated with the transmembrane signaling CD3 coreceptor proteins to form the TR-CD3 (TcR or TCR). The assembly of alpha-beta TR heterodimers with CD3 occurs in the endoplasmic reticulum where a single alpha-beta TR heterodimer associates with one CD3D-CD3E heterodimer, one CD3G-CD3E heterodimer and one CD247 homodimer forming a stable octameric structure. CD3D-CD3E and CD3G-CD3E heterodimers preferentially associate with TR alpha and TR beta chains, respectively. The association of the CD247 homodimer is the last step of TcR assembly in the endoplasmic reticulum and is required for transport to the cell surface.</text>
</comment>
<comment type="subcellular location">
    <subcellularLocation>
        <location evidence="4">Cell membrane</location>
    </subcellularLocation>
</comment>
<comment type="polymorphism">
    <text evidence="9">There are several alleles. The sequence shown is that of IMGT allele TRAV24*01.</text>
</comment>
<keyword id="KW-0002">3D-structure</keyword>
<keyword id="KW-1064">Adaptive immunity</keyword>
<keyword id="KW-1003">Cell membrane</keyword>
<keyword id="KW-1015">Disulfide bond</keyword>
<keyword id="KW-0325">Glycoprotein</keyword>
<keyword id="KW-0391">Immunity</keyword>
<keyword id="KW-0393">Immunoglobulin domain</keyword>
<keyword id="KW-0472">Membrane</keyword>
<keyword id="KW-0675">Receptor</keyword>
<keyword id="KW-1185">Reference proteome</keyword>
<keyword id="KW-0732">Signal</keyword>
<keyword id="KW-1279">T cell receptor</keyword>